<sequence length="385" mass="42255">MKMLPGVGVFGTGSSARVLVPLLRAEGFTVEALWGKTEEEAKQLAEEMNIAFYTSRTDDILLHQDVDLVCISIPPPLTRQISVKALGIGKNVVCEKAATSVDAFRMVTASRYYPQLMSLVGNVLRFLPAFVRMKQLISEHYVGAVMICDARIYSGSLLSPSYGWICDELMGGGGLHTMGTYIVDLLTHLTGRRAEKVHGLLKTFVRQNAAIRGIRHVTSDDFCFFQMLMGGGVCSTVTLNFNMPGAFVHEVMVVGSAGRLVARGADLYGQKNSATQEELLLRDSLAVGAGLPEQGPQDVPLLYLKGMVYMVQALRQSFQGQGDRRTWDRTPVSMAASFEDGLYMQSVVDAIKRSSRSGEWEAVEVLTEEPDTNQNLCEALQRNNL</sequence>
<accession>Q3B7J2</accession>
<accession>Q69YL9</accession>
<accession>Q6UXX6</accession>
<accession>Q7L648</accession>
<accession>Q8TE86</accession>
<accession>Q9BQ07</accession>
<accession>R4GNG5</accession>
<organism>
    <name type="scientific">Homo sapiens</name>
    <name type="common">Human</name>
    <dbReference type="NCBI Taxonomy" id="9606"/>
    <lineage>
        <taxon>Eukaryota</taxon>
        <taxon>Metazoa</taxon>
        <taxon>Chordata</taxon>
        <taxon>Craniata</taxon>
        <taxon>Vertebrata</taxon>
        <taxon>Euteleostomi</taxon>
        <taxon>Mammalia</taxon>
        <taxon>Eutheria</taxon>
        <taxon>Euarchontoglires</taxon>
        <taxon>Primates</taxon>
        <taxon>Haplorrhini</taxon>
        <taxon>Catarrhini</taxon>
        <taxon>Hominidae</taxon>
        <taxon>Homo</taxon>
    </lineage>
</organism>
<comment type="function">
    <text evidence="1">Promotes matrix assembly.</text>
</comment>
<comment type="subcellular location">
    <subcellularLocation>
        <location evidence="1">Secreted</location>
        <location evidence="1">Extracellular space</location>
        <location evidence="1">Extracellular matrix</location>
    </subcellularLocation>
</comment>
<comment type="alternative products">
    <event type="alternative splicing"/>
    <isoform>
        <id>Q3B7J2-1</id>
        <name>1</name>
        <sequence type="displayed"/>
    </isoform>
    <isoform>
        <id>Q3B7J2-2</id>
        <name>2</name>
        <sequence type="described" ref="VSP_024262"/>
    </isoform>
    <isoform>
        <id>Q3B7J2-3</id>
        <name>3</name>
        <sequence type="described" ref="VSP_055185 VSP_055186"/>
    </isoform>
</comment>
<comment type="similarity">
    <text evidence="5">Belongs to the Gfo/Idh/MocA family.</text>
</comment>
<comment type="sequence caution" evidence="5">
    <conflict type="erroneous initiation">
        <sequence resource="EMBL-CDS" id="AAQ88536"/>
    </conflict>
</comment>
<proteinExistence type="evidence at protein level"/>
<keyword id="KW-0025">Alternative splicing</keyword>
<keyword id="KW-0272">Extracellular matrix</keyword>
<keyword id="KW-0560">Oxidoreductase</keyword>
<keyword id="KW-1267">Proteomics identification</keyword>
<keyword id="KW-1185">Reference proteome</keyword>
<keyword id="KW-0964">Secreted</keyword>
<keyword id="KW-0732">Signal</keyword>
<name>GFOD2_HUMAN</name>
<evidence type="ECO:0000250" key="1"/>
<evidence type="ECO:0000255" key="2"/>
<evidence type="ECO:0000303" key="3">
    <source>
    </source>
</evidence>
<evidence type="ECO:0000303" key="4">
    <source>
    </source>
</evidence>
<evidence type="ECO:0000305" key="5"/>
<gene>
    <name type="primary">GFOD2</name>
    <name type="ORF">UNQ9430/PRO34691</name>
</gene>
<protein>
    <recommendedName>
        <fullName>Glucose-fructose oxidoreductase domain-containing protein 2</fullName>
        <ecNumber>1.-.-.-</ecNumber>
    </recommendedName>
</protein>
<reference key="1">
    <citation type="journal article" date="2003" name="Genome Res.">
        <title>The secreted protein discovery initiative (SPDI), a large-scale effort to identify novel human secreted and transmembrane proteins: a bioinformatics assessment.</title>
        <authorList>
            <person name="Clark H.F."/>
            <person name="Gurney A.L."/>
            <person name="Abaya E."/>
            <person name="Baker K."/>
            <person name="Baldwin D.T."/>
            <person name="Brush J."/>
            <person name="Chen J."/>
            <person name="Chow B."/>
            <person name="Chui C."/>
            <person name="Crowley C."/>
            <person name="Currell B."/>
            <person name="Deuel B."/>
            <person name="Dowd P."/>
            <person name="Eaton D."/>
            <person name="Foster J.S."/>
            <person name="Grimaldi C."/>
            <person name="Gu Q."/>
            <person name="Hass P.E."/>
            <person name="Heldens S."/>
            <person name="Huang A."/>
            <person name="Kim H.S."/>
            <person name="Klimowski L."/>
            <person name="Jin Y."/>
            <person name="Johnson S."/>
            <person name="Lee J."/>
            <person name="Lewis L."/>
            <person name="Liao D."/>
            <person name="Mark M.R."/>
            <person name="Robbie E."/>
            <person name="Sanchez C."/>
            <person name="Schoenfeld J."/>
            <person name="Seshagiri S."/>
            <person name="Simmons L."/>
            <person name="Singh J."/>
            <person name="Smith V."/>
            <person name="Stinson J."/>
            <person name="Vagts A."/>
            <person name="Vandlen R.L."/>
            <person name="Watanabe C."/>
            <person name="Wieand D."/>
            <person name="Woods K."/>
            <person name="Xie M.-H."/>
            <person name="Yansura D.G."/>
            <person name="Yi S."/>
            <person name="Yu G."/>
            <person name="Yuan J."/>
            <person name="Zhang M."/>
            <person name="Zhang Z."/>
            <person name="Goddard A.D."/>
            <person name="Wood W.I."/>
            <person name="Godowski P.J."/>
            <person name="Gray A.M."/>
        </authorList>
    </citation>
    <scope>NUCLEOTIDE SEQUENCE [LARGE SCALE MRNA] (ISOFORMS 1 AND 3)</scope>
</reference>
<reference key="2">
    <citation type="journal article" date="2004" name="Nat. Genet.">
        <title>Complete sequencing and characterization of 21,243 full-length human cDNAs.</title>
        <authorList>
            <person name="Ota T."/>
            <person name="Suzuki Y."/>
            <person name="Nishikawa T."/>
            <person name="Otsuki T."/>
            <person name="Sugiyama T."/>
            <person name="Irie R."/>
            <person name="Wakamatsu A."/>
            <person name="Hayashi K."/>
            <person name="Sato H."/>
            <person name="Nagai K."/>
            <person name="Kimura K."/>
            <person name="Makita H."/>
            <person name="Sekine M."/>
            <person name="Obayashi M."/>
            <person name="Nishi T."/>
            <person name="Shibahara T."/>
            <person name="Tanaka T."/>
            <person name="Ishii S."/>
            <person name="Yamamoto J."/>
            <person name="Saito K."/>
            <person name="Kawai Y."/>
            <person name="Isono Y."/>
            <person name="Nakamura Y."/>
            <person name="Nagahari K."/>
            <person name="Murakami K."/>
            <person name="Yasuda T."/>
            <person name="Iwayanagi T."/>
            <person name="Wagatsuma M."/>
            <person name="Shiratori A."/>
            <person name="Sudo H."/>
            <person name="Hosoiri T."/>
            <person name="Kaku Y."/>
            <person name="Kodaira H."/>
            <person name="Kondo H."/>
            <person name="Sugawara M."/>
            <person name="Takahashi M."/>
            <person name="Kanda K."/>
            <person name="Yokoi T."/>
            <person name="Furuya T."/>
            <person name="Kikkawa E."/>
            <person name="Omura Y."/>
            <person name="Abe K."/>
            <person name="Kamihara K."/>
            <person name="Katsuta N."/>
            <person name="Sato K."/>
            <person name="Tanikawa M."/>
            <person name="Yamazaki M."/>
            <person name="Ninomiya K."/>
            <person name="Ishibashi T."/>
            <person name="Yamashita H."/>
            <person name="Murakawa K."/>
            <person name="Fujimori K."/>
            <person name="Tanai H."/>
            <person name="Kimata M."/>
            <person name="Watanabe M."/>
            <person name="Hiraoka S."/>
            <person name="Chiba Y."/>
            <person name="Ishida S."/>
            <person name="Ono Y."/>
            <person name="Takiguchi S."/>
            <person name="Watanabe S."/>
            <person name="Yosida M."/>
            <person name="Hotuta T."/>
            <person name="Kusano J."/>
            <person name="Kanehori K."/>
            <person name="Takahashi-Fujii A."/>
            <person name="Hara H."/>
            <person name="Tanase T.-O."/>
            <person name="Nomura Y."/>
            <person name="Togiya S."/>
            <person name="Komai F."/>
            <person name="Hara R."/>
            <person name="Takeuchi K."/>
            <person name="Arita M."/>
            <person name="Imose N."/>
            <person name="Musashino K."/>
            <person name="Yuuki H."/>
            <person name="Oshima A."/>
            <person name="Sasaki N."/>
            <person name="Aotsuka S."/>
            <person name="Yoshikawa Y."/>
            <person name="Matsunawa H."/>
            <person name="Ichihara T."/>
            <person name="Shiohata N."/>
            <person name="Sano S."/>
            <person name="Moriya S."/>
            <person name="Momiyama H."/>
            <person name="Satoh N."/>
            <person name="Takami S."/>
            <person name="Terashima Y."/>
            <person name="Suzuki O."/>
            <person name="Nakagawa S."/>
            <person name="Senoh A."/>
            <person name="Mizoguchi H."/>
            <person name="Goto Y."/>
            <person name="Shimizu F."/>
            <person name="Wakebe H."/>
            <person name="Hishigaki H."/>
            <person name="Watanabe T."/>
            <person name="Sugiyama A."/>
            <person name="Takemoto M."/>
            <person name="Kawakami B."/>
            <person name="Yamazaki M."/>
            <person name="Watanabe K."/>
            <person name="Kumagai A."/>
            <person name="Itakura S."/>
            <person name="Fukuzumi Y."/>
            <person name="Fujimori Y."/>
            <person name="Komiyama M."/>
            <person name="Tashiro H."/>
            <person name="Tanigami A."/>
            <person name="Fujiwara T."/>
            <person name="Ono T."/>
            <person name="Yamada K."/>
            <person name="Fujii Y."/>
            <person name="Ozaki K."/>
            <person name="Hirao M."/>
            <person name="Ohmori Y."/>
            <person name="Kawabata A."/>
            <person name="Hikiji T."/>
            <person name="Kobatake N."/>
            <person name="Inagaki H."/>
            <person name="Ikema Y."/>
            <person name="Okamoto S."/>
            <person name="Okitani R."/>
            <person name="Kawakami T."/>
            <person name="Noguchi S."/>
            <person name="Itoh T."/>
            <person name="Shigeta K."/>
            <person name="Senba T."/>
            <person name="Matsumura K."/>
            <person name="Nakajima Y."/>
            <person name="Mizuno T."/>
            <person name="Morinaga M."/>
            <person name="Sasaki M."/>
            <person name="Togashi T."/>
            <person name="Oyama M."/>
            <person name="Hata H."/>
            <person name="Watanabe M."/>
            <person name="Komatsu T."/>
            <person name="Mizushima-Sugano J."/>
            <person name="Satoh T."/>
            <person name="Shirai Y."/>
            <person name="Takahashi Y."/>
            <person name="Nakagawa K."/>
            <person name="Okumura K."/>
            <person name="Nagase T."/>
            <person name="Nomura N."/>
            <person name="Kikuchi H."/>
            <person name="Masuho Y."/>
            <person name="Yamashita R."/>
            <person name="Nakai K."/>
            <person name="Yada T."/>
            <person name="Nakamura Y."/>
            <person name="Ohara O."/>
            <person name="Isogai T."/>
            <person name="Sugano S."/>
        </authorList>
    </citation>
    <scope>NUCLEOTIDE SEQUENCE [LARGE SCALE MRNA] (ISOFORM 1)</scope>
</reference>
<reference key="3">
    <citation type="journal article" date="2004" name="Nature">
        <title>The sequence and analysis of duplication-rich human chromosome 16.</title>
        <authorList>
            <person name="Martin J."/>
            <person name="Han C."/>
            <person name="Gordon L.A."/>
            <person name="Terry A."/>
            <person name="Prabhakar S."/>
            <person name="She X."/>
            <person name="Xie G."/>
            <person name="Hellsten U."/>
            <person name="Chan Y.M."/>
            <person name="Altherr M."/>
            <person name="Couronne O."/>
            <person name="Aerts A."/>
            <person name="Bajorek E."/>
            <person name="Black S."/>
            <person name="Blumer H."/>
            <person name="Branscomb E."/>
            <person name="Brown N.C."/>
            <person name="Bruno W.J."/>
            <person name="Buckingham J.M."/>
            <person name="Callen D.F."/>
            <person name="Campbell C.S."/>
            <person name="Campbell M.L."/>
            <person name="Campbell E.W."/>
            <person name="Caoile C."/>
            <person name="Challacombe J.F."/>
            <person name="Chasteen L.A."/>
            <person name="Chertkov O."/>
            <person name="Chi H.C."/>
            <person name="Christensen M."/>
            <person name="Clark L.M."/>
            <person name="Cohn J.D."/>
            <person name="Denys M."/>
            <person name="Detter J.C."/>
            <person name="Dickson M."/>
            <person name="Dimitrijevic-Bussod M."/>
            <person name="Escobar J."/>
            <person name="Fawcett J.J."/>
            <person name="Flowers D."/>
            <person name="Fotopulos D."/>
            <person name="Glavina T."/>
            <person name="Gomez M."/>
            <person name="Gonzales E."/>
            <person name="Goodstein D."/>
            <person name="Goodwin L.A."/>
            <person name="Grady D.L."/>
            <person name="Grigoriev I."/>
            <person name="Groza M."/>
            <person name="Hammon N."/>
            <person name="Hawkins T."/>
            <person name="Haydu L."/>
            <person name="Hildebrand C.E."/>
            <person name="Huang W."/>
            <person name="Israni S."/>
            <person name="Jett J."/>
            <person name="Jewett P.B."/>
            <person name="Kadner K."/>
            <person name="Kimball H."/>
            <person name="Kobayashi A."/>
            <person name="Krawczyk M.-C."/>
            <person name="Leyba T."/>
            <person name="Longmire J.L."/>
            <person name="Lopez F."/>
            <person name="Lou Y."/>
            <person name="Lowry S."/>
            <person name="Ludeman T."/>
            <person name="Manohar C.F."/>
            <person name="Mark G.A."/>
            <person name="McMurray K.L."/>
            <person name="Meincke L.J."/>
            <person name="Morgan J."/>
            <person name="Moyzis R.K."/>
            <person name="Mundt M.O."/>
            <person name="Munk A.C."/>
            <person name="Nandkeshwar R.D."/>
            <person name="Pitluck S."/>
            <person name="Pollard M."/>
            <person name="Predki P."/>
            <person name="Parson-Quintana B."/>
            <person name="Ramirez L."/>
            <person name="Rash S."/>
            <person name="Retterer J."/>
            <person name="Ricke D.O."/>
            <person name="Robinson D.L."/>
            <person name="Rodriguez A."/>
            <person name="Salamov A."/>
            <person name="Saunders E.H."/>
            <person name="Scott D."/>
            <person name="Shough T."/>
            <person name="Stallings R.L."/>
            <person name="Stalvey M."/>
            <person name="Sutherland R.D."/>
            <person name="Tapia R."/>
            <person name="Tesmer J.G."/>
            <person name="Thayer N."/>
            <person name="Thompson L.S."/>
            <person name="Tice H."/>
            <person name="Torney D.C."/>
            <person name="Tran-Gyamfi M."/>
            <person name="Tsai M."/>
            <person name="Ulanovsky L.E."/>
            <person name="Ustaszewska A."/>
            <person name="Vo N."/>
            <person name="White P.S."/>
            <person name="Williams A.L."/>
            <person name="Wills P.L."/>
            <person name="Wu J.-R."/>
            <person name="Wu K."/>
            <person name="Yang J."/>
            <person name="DeJong P."/>
            <person name="Bruce D."/>
            <person name="Doggett N.A."/>
            <person name="Deaven L."/>
            <person name="Schmutz J."/>
            <person name="Grimwood J."/>
            <person name="Richardson P."/>
            <person name="Rokhsar D.S."/>
            <person name="Eichler E.E."/>
            <person name="Gilna P."/>
            <person name="Lucas S.M."/>
            <person name="Myers R.M."/>
            <person name="Rubin E.M."/>
            <person name="Pennacchio L.A."/>
        </authorList>
    </citation>
    <scope>NUCLEOTIDE SEQUENCE [LARGE SCALE GENOMIC DNA]</scope>
</reference>
<reference key="4">
    <citation type="journal article" date="2004" name="Genome Res.">
        <title>The status, quality, and expansion of the NIH full-length cDNA project: the Mammalian Gene Collection (MGC).</title>
        <authorList>
            <consortium name="The MGC Project Team"/>
        </authorList>
    </citation>
    <scope>NUCLEOTIDE SEQUENCE [LARGE SCALE MRNA] (ISOFORMS 1 AND 2)</scope>
    <source>
        <tissue>Lung</tissue>
        <tissue>Skin</tissue>
    </source>
</reference>
<reference key="5">
    <citation type="journal article" date="2007" name="BMC Genomics">
        <title>The full-ORF clone resource of the German cDNA consortium.</title>
        <authorList>
            <person name="Bechtel S."/>
            <person name="Rosenfelder H."/>
            <person name="Duda A."/>
            <person name="Schmidt C.P."/>
            <person name="Ernst U."/>
            <person name="Wellenreuther R."/>
            <person name="Mehrle A."/>
            <person name="Schuster C."/>
            <person name="Bahr A."/>
            <person name="Bloecker H."/>
            <person name="Heubner D."/>
            <person name="Hoerlein A."/>
            <person name="Michel G."/>
            <person name="Wedler H."/>
            <person name="Koehrer K."/>
            <person name="Ottenwaelder B."/>
            <person name="Poustka A."/>
            <person name="Wiemann S."/>
            <person name="Schupp I."/>
        </authorList>
    </citation>
    <scope>NUCLEOTIDE SEQUENCE [LARGE SCALE MRNA] OF 90-385 (ISOFORMS 1/2)</scope>
    <source>
        <tissue>Melanoma</tissue>
    </source>
</reference>
<feature type="signal peptide" evidence="2">
    <location>
        <begin position="1"/>
        <end position="25"/>
    </location>
</feature>
<feature type="chain" id="PRO_0000282972" description="Glucose-fructose oxidoreductase domain-containing protein 2">
    <location>
        <begin position="26"/>
        <end position="385"/>
    </location>
</feature>
<feature type="splice variant" id="VSP_024262" description="In isoform 2." evidence="4">
    <location>
        <begin position="1"/>
        <end position="105"/>
    </location>
</feature>
<feature type="splice variant" id="VSP_055185" description="In isoform 3." evidence="3">
    <original>GIGKNVVCEKAATSVDAFRMVTASRY</original>
    <variation>GTPGRPQQGQIMSLPLGSPLRVTPLL</variation>
    <location>
        <begin position="87"/>
        <end position="112"/>
    </location>
</feature>
<feature type="splice variant" id="VSP_055186" description="In isoform 3." evidence="3">
    <location>
        <begin position="113"/>
        <end position="385"/>
    </location>
</feature>
<feature type="sequence variant" id="VAR_054433" description="In dbSNP:rs11539687.">
    <original>G</original>
    <variation>V</variation>
    <location>
        <position position="231"/>
    </location>
</feature>
<feature type="sequence conflict" description="In Ref. 2; BAB85066." evidence="5" ref="2">
    <original>G</original>
    <variation>D</variation>
    <location>
        <position position="8"/>
    </location>
</feature>
<dbReference type="EC" id="1.-.-.-"/>
<dbReference type="EMBL" id="AY358169">
    <property type="protein sequence ID" value="AAQ88536.1"/>
    <property type="status" value="ALT_INIT"/>
    <property type="molecule type" value="mRNA"/>
</dbReference>
<dbReference type="EMBL" id="AK074382">
    <property type="protein sequence ID" value="BAB85066.1"/>
    <property type="molecule type" value="mRNA"/>
</dbReference>
<dbReference type="EMBL" id="AK307280">
    <property type="status" value="NOT_ANNOTATED_CDS"/>
    <property type="molecule type" value="mRNA"/>
</dbReference>
<dbReference type="EMBL" id="AC010530">
    <property type="status" value="NOT_ANNOTATED_CDS"/>
    <property type="molecule type" value="Genomic_DNA"/>
</dbReference>
<dbReference type="EMBL" id="BC000757">
    <property type="protein sequence ID" value="AAH00757.1"/>
    <property type="molecule type" value="mRNA"/>
</dbReference>
<dbReference type="EMBL" id="BC002943">
    <property type="protein sequence ID" value="AAH02943.2"/>
    <property type="molecule type" value="mRNA"/>
</dbReference>
<dbReference type="EMBL" id="BC107585">
    <property type="protein sequence ID" value="AAI07586.1"/>
    <property type="molecule type" value="mRNA"/>
</dbReference>
<dbReference type="EMBL" id="AL832904">
    <property type="protein sequence ID" value="CAH10637.1"/>
    <property type="molecule type" value="mRNA"/>
</dbReference>
<dbReference type="CCDS" id="CCDS10845.1">
    <molecule id="Q3B7J2-1"/>
</dbReference>
<dbReference type="CCDS" id="CCDS59268.1">
    <molecule id="Q3B7J2-3"/>
</dbReference>
<dbReference type="RefSeq" id="NP_001230579.1">
    <molecule id="Q3B7J2-3"/>
    <property type="nucleotide sequence ID" value="NM_001243650.2"/>
</dbReference>
<dbReference type="RefSeq" id="NP_110446.3">
    <molecule id="Q3B7J2-1"/>
    <property type="nucleotide sequence ID" value="NM_030819.3"/>
</dbReference>
<dbReference type="RefSeq" id="XP_006721351.1">
    <molecule id="Q3B7J2-2"/>
    <property type="nucleotide sequence ID" value="XM_006721288.5"/>
</dbReference>
<dbReference type="RefSeq" id="XP_016879227.1">
    <property type="nucleotide sequence ID" value="XM_017023738.1"/>
</dbReference>
<dbReference type="RefSeq" id="XP_047290679.1">
    <molecule id="Q3B7J2-1"/>
    <property type="nucleotide sequence ID" value="XM_047434723.1"/>
</dbReference>
<dbReference type="RefSeq" id="XP_047290680.1">
    <molecule id="Q3B7J2-1"/>
    <property type="nucleotide sequence ID" value="XM_047434724.1"/>
</dbReference>
<dbReference type="RefSeq" id="XP_054170034.1">
    <molecule id="Q3B7J2-1"/>
    <property type="nucleotide sequence ID" value="XM_054314059.1"/>
</dbReference>
<dbReference type="RefSeq" id="XP_054170035.1">
    <molecule id="Q3B7J2-1"/>
    <property type="nucleotide sequence ID" value="XM_054314060.1"/>
</dbReference>
<dbReference type="RefSeq" id="XP_054170036.1">
    <molecule id="Q3B7J2-2"/>
    <property type="nucleotide sequence ID" value="XM_054314061.1"/>
</dbReference>
<dbReference type="SMR" id="Q3B7J2"/>
<dbReference type="BioGRID" id="123537">
    <property type="interactions" value="8"/>
</dbReference>
<dbReference type="FunCoup" id="Q3B7J2">
    <property type="interactions" value="90"/>
</dbReference>
<dbReference type="IntAct" id="Q3B7J2">
    <property type="interactions" value="4"/>
</dbReference>
<dbReference type="STRING" id="9606.ENSP00000268797"/>
<dbReference type="iPTMnet" id="Q3B7J2"/>
<dbReference type="PhosphoSitePlus" id="Q3B7J2"/>
<dbReference type="BioMuta" id="GFOD2"/>
<dbReference type="DMDM" id="121942382"/>
<dbReference type="jPOST" id="Q3B7J2"/>
<dbReference type="MassIVE" id="Q3B7J2"/>
<dbReference type="PaxDb" id="9606-ENSP00000268797"/>
<dbReference type="PeptideAtlas" id="Q3B7J2"/>
<dbReference type="ProteomicsDB" id="61654">
    <molecule id="Q3B7J2-1"/>
</dbReference>
<dbReference type="ProteomicsDB" id="61655">
    <molecule id="Q3B7J2-2"/>
</dbReference>
<dbReference type="Pumba" id="Q3B7J2"/>
<dbReference type="TopDownProteomics" id="Q3B7J2-1">
    <molecule id="Q3B7J2-1"/>
</dbReference>
<dbReference type="Antibodypedia" id="29615">
    <property type="antibodies" value="173 antibodies from 21 providers"/>
</dbReference>
<dbReference type="DNASU" id="81577"/>
<dbReference type="Ensembl" id="ENST00000268797.12">
    <molecule id="Q3B7J2-1"/>
    <property type="protein sequence ID" value="ENSP00000268797.7"/>
    <property type="gene ID" value="ENSG00000141098.13"/>
</dbReference>
<dbReference type="Ensembl" id="ENST00000602279.2">
    <molecule id="Q3B7J2-3"/>
    <property type="protein sequence ID" value="ENSP00000478260.1"/>
    <property type="gene ID" value="ENSG00000141098.13"/>
</dbReference>
<dbReference type="Ensembl" id="ENST00000602496.1">
    <molecule id="Q3B7J2-3"/>
    <property type="protein sequence ID" value="ENSP00000473641.1"/>
    <property type="gene ID" value="ENSG00000141098.13"/>
</dbReference>
<dbReference type="GeneID" id="81577"/>
<dbReference type="KEGG" id="hsa:81577"/>
<dbReference type="MANE-Select" id="ENST00000268797.12">
    <property type="protein sequence ID" value="ENSP00000268797.7"/>
    <property type="RefSeq nucleotide sequence ID" value="NM_030819.4"/>
    <property type="RefSeq protein sequence ID" value="NP_110446.3"/>
</dbReference>
<dbReference type="UCSC" id="uc002eub.4">
    <molecule id="Q3B7J2-1"/>
    <property type="organism name" value="human"/>
</dbReference>
<dbReference type="AGR" id="HGNC:28159"/>
<dbReference type="CTD" id="81577"/>
<dbReference type="DisGeNET" id="81577"/>
<dbReference type="GeneCards" id="GFOD2"/>
<dbReference type="HGNC" id="HGNC:28159">
    <property type="gene designation" value="GFOD2"/>
</dbReference>
<dbReference type="HPA" id="ENSG00000141098">
    <property type="expression patterns" value="Tissue enhanced (brain)"/>
</dbReference>
<dbReference type="MIM" id="619933">
    <property type="type" value="gene"/>
</dbReference>
<dbReference type="neXtProt" id="NX_Q3B7J2"/>
<dbReference type="OpenTargets" id="ENSG00000141098"/>
<dbReference type="PharmGKB" id="PA144596430"/>
<dbReference type="VEuPathDB" id="HostDB:ENSG00000141098"/>
<dbReference type="eggNOG" id="KOG2742">
    <property type="taxonomic scope" value="Eukaryota"/>
</dbReference>
<dbReference type="GeneTree" id="ENSGT00940000156501"/>
<dbReference type="HOGENOM" id="CLU_023194_8_0_1"/>
<dbReference type="InParanoid" id="Q3B7J2"/>
<dbReference type="OMA" id="YVGEIQV"/>
<dbReference type="OrthoDB" id="446809at2759"/>
<dbReference type="PAN-GO" id="Q3B7J2">
    <property type="GO annotations" value="2 GO annotations based on evolutionary models"/>
</dbReference>
<dbReference type="PhylomeDB" id="Q3B7J2"/>
<dbReference type="TreeFam" id="TF323246"/>
<dbReference type="PathwayCommons" id="Q3B7J2"/>
<dbReference type="SignaLink" id="Q3B7J2"/>
<dbReference type="BioGRID-ORCS" id="81577">
    <property type="hits" value="11 hits in 1153 CRISPR screens"/>
</dbReference>
<dbReference type="ChiTaRS" id="GFOD2">
    <property type="organism name" value="human"/>
</dbReference>
<dbReference type="GenomeRNAi" id="81577"/>
<dbReference type="Pharos" id="Q3B7J2">
    <property type="development level" value="Tdark"/>
</dbReference>
<dbReference type="PRO" id="PR:Q3B7J2"/>
<dbReference type="Proteomes" id="UP000005640">
    <property type="component" value="Chromosome 16"/>
</dbReference>
<dbReference type="RNAct" id="Q3B7J2">
    <property type="molecule type" value="protein"/>
</dbReference>
<dbReference type="Bgee" id="ENSG00000141098">
    <property type="expression patterns" value="Expressed in lower esophagus mucosa and 156 other cell types or tissues"/>
</dbReference>
<dbReference type="ExpressionAtlas" id="Q3B7J2">
    <property type="expression patterns" value="baseline and differential"/>
</dbReference>
<dbReference type="GO" id="GO:0031012">
    <property type="term" value="C:extracellular matrix"/>
    <property type="evidence" value="ECO:0000318"/>
    <property type="project" value="GO_Central"/>
</dbReference>
<dbReference type="GO" id="GO:0005576">
    <property type="term" value="C:extracellular region"/>
    <property type="evidence" value="ECO:0007669"/>
    <property type="project" value="UniProtKB-KW"/>
</dbReference>
<dbReference type="GO" id="GO:0000166">
    <property type="term" value="F:nucleotide binding"/>
    <property type="evidence" value="ECO:0007669"/>
    <property type="project" value="InterPro"/>
</dbReference>
<dbReference type="GO" id="GO:0016491">
    <property type="term" value="F:oxidoreductase activity"/>
    <property type="evidence" value="ECO:0007669"/>
    <property type="project" value="UniProtKB-KW"/>
</dbReference>
<dbReference type="GO" id="GO:0030198">
    <property type="term" value="P:extracellular matrix organization"/>
    <property type="evidence" value="ECO:0000318"/>
    <property type="project" value="GO_Central"/>
</dbReference>
<dbReference type="FunFam" id="3.30.360.10:FF:000025">
    <property type="entry name" value="Glucose-fructose oxidoreductase domain-containing protein 2"/>
    <property type="match status" value="1"/>
</dbReference>
<dbReference type="FunFam" id="3.40.50.720:FF:000233">
    <property type="entry name" value="Glucose-fructose oxidoreductase domain-containing protein 2"/>
    <property type="match status" value="1"/>
</dbReference>
<dbReference type="Gene3D" id="3.30.360.10">
    <property type="entry name" value="Dihydrodipicolinate Reductase, domain 2"/>
    <property type="match status" value="1"/>
</dbReference>
<dbReference type="Gene3D" id="3.40.50.720">
    <property type="entry name" value="NAD(P)-binding Rossmann-like Domain"/>
    <property type="match status" value="1"/>
</dbReference>
<dbReference type="InterPro" id="IPR000683">
    <property type="entry name" value="Gfo/Idh/MocA-like_OxRdtase_N"/>
</dbReference>
<dbReference type="InterPro" id="IPR050463">
    <property type="entry name" value="Gfo/Idh/MocA_oxidrdct_glycsds"/>
</dbReference>
<dbReference type="InterPro" id="IPR055170">
    <property type="entry name" value="GFO_IDH_MocA-like_dom"/>
</dbReference>
<dbReference type="InterPro" id="IPR036291">
    <property type="entry name" value="NAD(P)-bd_dom_sf"/>
</dbReference>
<dbReference type="PANTHER" id="PTHR43818">
    <property type="entry name" value="BCDNA.GH03377"/>
    <property type="match status" value="1"/>
</dbReference>
<dbReference type="PANTHER" id="PTHR43818:SF8">
    <property type="entry name" value="GLUCOSE-FRUCTOSE OXIDOREDUCTASE DOMAIN-CONTAINING PROTEIN 2"/>
    <property type="match status" value="1"/>
</dbReference>
<dbReference type="Pfam" id="PF01408">
    <property type="entry name" value="GFO_IDH_MocA"/>
    <property type="match status" value="1"/>
</dbReference>
<dbReference type="Pfam" id="PF22725">
    <property type="entry name" value="GFO_IDH_MocA_C3"/>
    <property type="match status" value="1"/>
</dbReference>
<dbReference type="SUPFAM" id="SSF55347">
    <property type="entry name" value="Glyceraldehyde-3-phosphate dehydrogenase-like, C-terminal domain"/>
    <property type="match status" value="1"/>
</dbReference>
<dbReference type="SUPFAM" id="SSF51735">
    <property type="entry name" value="NAD(P)-binding Rossmann-fold domains"/>
    <property type="match status" value="1"/>
</dbReference>